<feature type="chain" id="PRO_1000097140" description="4-hydroxy-3-methylbut-2-en-1-yl diphosphate synthase (flavodoxin)">
    <location>
        <begin position="1"/>
        <end position="371"/>
    </location>
</feature>
<feature type="binding site" evidence="1">
    <location>
        <position position="269"/>
    </location>
    <ligand>
        <name>[4Fe-4S] cluster</name>
        <dbReference type="ChEBI" id="CHEBI:49883"/>
    </ligand>
</feature>
<feature type="binding site" evidence="1">
    <location>
        <position position="272"/>
    </location>
    <ligand>
        <name>[4Fe-4S] cluster</name>
        <dbReference type="ChEBI" id="CHEBI:49883"/>
    </ligand>
</feature>
<feature type="binding site" evidence="1">
    <location>
        <position position="304"/>
    </location>
    <ligand>
        <name>[4Fe-4S] cluster</name>
        <dbReference type="ChEBI" id="CHEBI:49883"/>
    </ligand>
</feature>
<feature type="binding site" evidence="1">
    <location>
        <position position="311"/>
    </location>
    <ligand>
        <name>[4Fe-4S] cluster</name>
        <dbReference type="ChEBI" id="CHEBI:49883"/>
    </ligand>
</feature>
<gene>
    <name evidence="1" type="primary">ispG</name>
    <name type="ordered locus">ABAYE3263</name>
</gene>
<keyword id="KW-0004">4Fe-4S</keyword>
<keyword id="KW-0408">Iron</keyword>
<keyword id="KW-0411">Iron-sulfur</keyword>
<keyword id="KW-0414">Isoprene biosynthesis</keyword>
<keyword id="KW-0479">Metal-binding</keyword>
<keyword id="KW-0560">Oxidoreductase</keyword>
<evidence type="ECO:0000255" key="1">
    <source>
        <dbReference type="HAMAP-Rule" id="MF_00159"/>
    </source>
</evidence>
<protein>
    <recommendedName>
        <fullName evidence="1">4-hydroxy-3-methylbut-2-en-1-yl diphosphate synthase (flavodoxin)</fullName>
        <ecNumber evidence="1">1.17.7.3</ecNumber>
    </recommendedName>
    <alternativeName>
        <fullName evidence="1">1-hydroxy-2-methyl-2-(E)-butenyl 4-diphosphate synthase</fullName>
    </alternativeName>
</protein>
<organism>
    <name type="scientific">Acinetobacter baumannii (strain AYE)</name>
    <dbReference type="NCBI Taxonomy" id="509173"/>
    <lineage>
        <taxon>Bacteria</taxon>
        <taxon>Pseudomonadati</taxon>
        <taxon>Pseudomonadota</taxon>
        <taxon>Gammaproteobacteria</taxon>
        <taxon>Moraxellales</taxon>
        <taxon>Moraxellaceae</taxon>
        <taxon>Acinetobacter</taxon>
        <taxon>Acinetobacter calcoaceticus/baumannii complex</taxon>
    </lineage>
</organism>
<accession>B0V5G7</accession>
<name>ISPG_ACIBY</name>
<dbReference type="EC" id="1.17.7.3" evidence="1"/>
<dbReference type="EMBL" id="CU459141">
    <property type="protein sequence ID" value="CAM88064.1"/>
    <property type="molecule type" value="Genomic_DNA"/>
</dbReference>
<dbReference type="RefSeq" id="WP_000572095.1">
    <property type="nucleotide sequence ID" value="NZ_JBDGFB010000008.1"/>
</dbReference>
<dbReference type="SMR" id="B0V5G7"/>
<dbReference type="EnsemblBacteria" id="CAM88064">
    <property type="protein sequence ID" value="CAM88064"/>
    <property type="gene ID" value="ABAYE3263"/>
</dbReference>
<dbReference type="GeneID" id="92892505"/>
<dbReference type="KEGG" id="aby:ABAYE3263"/>
<dbReference type="HOGENOM" id="CLU_042258_0_0_6"/>
<dbReference type="UniPathway" id="UPA00056">
    <property type="reaction ID" value="UER00096"/>
</dbReference>
<dbReference type="GO" id="GO:0051539">
    <property type="term" value="F:4 iron, 4 sulfur cluster binding"/>
    <property type="evidence" value="ECO:0007669"/>
    <property type="project" value="UniProtKB-UniRule"/>
</dbReference>
<dbReference type="GO" id="GO:0046429">
    <property type="term" value="F:4-hydroxy-3-methylbut-2-en-1-yl diphosphate synthase activity (ferredoxin)"/>
    <property type="evidence" value="ECO:0007669"/>
    <property type="project" value="UniProtKB-UniRule"/>
</dbReference>
<dbReference type="GO" id="GO:0141197">
    <property type="term" value="F:4-hydroxy-3-methylbut-2-enyl-diphosphate synthase activity (flavodoxin)"/>
    <property type="evidence" value="ECO:0007669"/>
    <property type="project" value="UniProtKB-EC"/>
</dbReference>
<dbReference type="GO" id="GO:0005506">
    <property type="term" value="F:iron ion binding"/>
    <property type="evidence" value="ECO:0007669"/>
    <property type="project" value="InterPro"/>
</dbReference>
<dbReference type="GO" id="GO:0019288">
    <property type="term" value="P:isopentenyl diphosphate biosynthetic process, methylerythritol 4-phosphate pathway"/>
    <property type="evidence" value="ECO:0007669"/>
    <property type="project" value="UniProtKB-UniRule"/>
</dbReference>
<dbReference type="GO" id="GO:0016114">
    <property type="term" value="P:terpenoid biosynthetic process"/>
    <property type="evidence" value="ECO:0007669"/>
    <property type="project" value="InterPro"/>
</dbReference>
<dbReference type="FunFam" id="3.20.20.20:FF:000001">
    <property type="entry name" value="4-hydroxy-3-methylbut-2-en-1-yl diphosphate synthase (flavodoxin)"/>
    <property type="match status" value="1"/>
</dbReference>
<dbReference type="Gene3D" id="3.20.20.20">
    <property type="entry name" value="Dihydropteroate synthase-like"/>
    <property type="match status" value="1"/>
</dbReference>
<dbReference type="Gene3D" id="3.30.413.10">
    <property type="entry name" value="Sulfite Reductase Hemoprotein, domain 1"/>
    <property type="match status" value="1"/>
</dbReference>
<dbReference type="HAMAP" id="MF_00159">
    <property type="entry name" value="IspG"/>
    <property type="match status" value="1"/>
</dbReference>
<dbReference type="InterPro" id="IPR011005">
    <property type="entry name" value="Dihydropteroate_synth-like_sf"/>
</dbReference>
<dbReference type="InterPro" id="IPR016425">
    <property type="entry name" value="IspG_bac"/>
</dbReference>
<dbReference type="InterPro" id="IPR004588">
    <property type="entry name" value="IspG_bac-typ"/>
</dbReference>
<dbReference type="InterPro" id="IPR045854">
    <property type="entry name" value="NO2/SO3_Rdtase_4Fe4S_sf"/>
</dbReference>
<dbReference type="NCBIfam" id="TIGR00612">
    <property type="entry name" value="ispG_gcpE"/>
    <property type="match status" value="1"/>
</dbReference>
<dbReference type="NCBIfam" id="NF001540">
    <property type="entry name" value="PRK00366.1"/>
    <property type="match status" value="1"/>
</dbReference>
<dbReference type="PANTHER" id="PTHR30454">
    <property type="entry name" value="4-HYDROXY-3-METHYLBUT-2-EN-1-YL DIPHOSPHATE SYNTHASE"/>
    <property type="match status" value="1"/>
</dbReference>
<dbReference type="PANTHER" id="PTHR30454:SF0">
    <property type="entry name" value="4-HYDROXY-3-METHYLBUT-2-EN-1-YL DIPHOSPHATE SYNTHASE (FERREDOXIN), CHLOROPLASTIC"/>
    <property type="match status" value="1"/>
</dbReference>
<dbReference type="Pfam" id="PF04551">
    <property type="entry name" value="GcpE"/>
    <property type="match status" value="1"/>
</dbReference>
<dbReference type="PIRSF" id="PIRSF004640">
    <property type="entry name" value="IspG"/>
    <property type="match status" value="1"/>
</dbReference>
<dbReference type="SUPFAM" id="SSF51717">
    <property type="entry name" value="Dihydropteroate synthetase-like"/>
    <property type="match status" value="1"/>
</dbReference>
<dbReference type="SUPFAM" id="SSF56014">
    <property type="entry name" value="Nitrite and sulphite reductase 4Fe-4S domain-like"/>
    <property type="match status" value="1"/>
</dbReference>
<proteinExistence type="inferred from homology"/>
<sequence>MIENPIKRRPTRKIRVGSVYVGGDAPISVQSMTNTETCDVDATVAQIERCVDAGADIMRVSVPSMEAAEAFGAIRKRVSVPLVADIHFDHRIALAVADYGADCLRINPGNIGSDQKVREVVAAARHHGISMRIGVNAGSLEKDLQKKYGEPTGQALLESALRHIDILDRLDFHEFKVSVKASNVFLTMDAYRLLSQQIDNPLHLGVTEAGIYRTGTVKSAIALGGLLMEGIGDTMRISLAAEPEDEIKIGFDILKSLGLRSNGINFIACPSCSRQEFNVIQVMQALEERLEDIRTPMDVSVIGCKVNGPGEAKEADIGVVGAAPRSLVYRNGEKSHLIDTNQLVDEIETMVRQRVQELEEAKSKEIIRSSS</sequence>
<comment type="function">
    <text evidence="1">Converts 2C-methyl-D-erythritol 2,4-cyclodiphosphate (ME-2,4cPP) into 1-hydroxy-2-methyl-2-(E)-butenyl 4-diphosphate.</text>
</comment>
<comment type="catalytic activity">
    <reaction evidence="1">
        <text>(2E)-4-hydroxy-3-methylbut-2-enyl diphosphate + oxidized [flavodoxin] + H2O + 2 H(+) = 2-C-methyl-D-erythritol 2,4-cyclic diphosphate + reduced [flavodoxin]</text>
        <dbReference type="Rhea" id="RHEA:43604"/>
        <dbReference type="Rhea" id="RHEA-COMP:10622"/>
        <dbReference type="Rhea" id="RHEA-COMP:10623"/>
        <dbReference type="ChEBI" id="CHEBI:15377"/>
        <dbReference type="ChEBI" id="CHEBI:15378"/>
        <dbReference type="ChEBI" id="CHEBI:57618"/>
        <dbReference type="ChEBI" id="CHEBI:58210"/>
        <dbReference type="ChEBI" id="CHEBI:58483"/>
        <dbReference type="ChEBI" id="CHEBI:128753"/>
        <dbReference type="EC" id="1.17.7.3"/>
    </reaction>
</comment>
<comment type="cofactor">
    <cofactor evidence="1">
        <name>[4Fe-4S] cluster</name>
        <dbReference type="ChEBI" id="CHEBI:49883"/>
    </cofactor>
    <text evidence="1">Binds 1 [4Fe-4S] cluster.</text>
</comment>
<comment type="pathway">
    <text evidence="1">Isoprenoid biosynthesis; isopentenyl diphosphate biosynthesis via DXP pathway; isopentenyl diphosphate from 1-deoxy-D-xylulose 5-phosphate: step 5/6.</text>
</comment>
<comment type="similarity">
    <text evidence="1">Belongs to the IspG family.</text>
</comment>
<reference key="1">
    <citation type="journal article" date="2008" name="PLoS ONE">
        <title>Comparative analysis of Acinetobacters: three genomes for three lifestyles.</title>
        <authorList>
            <person name="Vallenet D."/>
            <person name="Nordmann P."/>
            <person name="Barbe V."/>
            <person name="Poirel L."/>
            <person name="Mangenot S."/>
            <person name="Bataille E."/>
            <person name="Dossat C."/>
            <person name="Gas S."/>
            <person name="Kreimeyer A."/>
            <person name="Lenoble P."/>
            <person name="Oztas S."/>
            <person name="Poulain J."/>
            <person name="Segurens B."/>
            <person name="Robert C."/>
            <person name="Abergel C."/>
            <person name="Claverie J.-M."/>
            <person name="Raoult D."/>
            <person name="Medigue C."/>
            <person name="Weissenbach J."/>
            <person name="Cruveiller S."/>
        </authorList>
    </citation>
    <scope>NUCLEOTIDE SEQUENCE [LARGE SCALE GENOMIC DNA]</scope>
    <source>
        <strain>AYE</strain>
    </source>
</reference>